<accession>A9KKU0</accession>
<name>DNAK_LACP7</name>
<comment type="function">
    <text evidence="1">Acts as a chaperone.</text>
</comment>
<comment type="induction">
    <text evidence="1">By stress conditions e.g. heat shock.</text>
</comment>
<comment type="similarity">
    <text evidence="1">Belongs to the heat shock protein 70 family.</text>
</comment>
<proteinExistence type="inferred from homology"/>
<sequence length="620" mass="66127">MGKIIGIDLGTTNSCVAVMEGGKPVVIANTEGSRTTPSVVAFTKTGERIVGEPAKRQAVTNADKTISSIKRHMGTDFRVSIDDKKFTPQEISAMVLQKLKADAEGYLGEKISEAVITVPAYFNDAQRQATKDAGKIAGLDVKRIINEPTAAALAYGLDNEHEQKIMVYDLGGGTFDVSIIEIGDGVIEVLATSGDNRLGGDDFDERVTRYFIDEFKKAEGVDLSTDKMALQRLREAAEKAKKELSSATTTNINLPFITATSEGPKHFDLNLTRAKFDELTHDLVERTAIPVQNALRDAGLAPSELGKVLLVGGSTRIPAVQDKVKQLTGHEPSKSLNPDECVAIGASVQGGKLAGDTGAGDILLLDVTPLSLSIETMGGIATRLIERNTTIPSKKSQIFSTAADNQTAVDINVVQGERQFAKDNKSLGQFRLDGIPPARRGIPQIEVTFDIDANGIVNVSAKDLGTGKEQHITITAGSNMSDSDIDKAVREAAEYEAQDKKRKDAVDTRNDADSIVFQTEKALSEVGDKVSADEKTAVEADLNHLKDLVAKANPEVMSEGEVEDMKAAKEKLMNSAQALFAKLYESAQGAAGAGPDMSGAGPQGDTYAGDDVVDGDYREV</sequence>
<reference key="1">
    <citation type="submission" date="2007-11" db="EMBL/GenBank/DDBJ databases">
        <title>Complete genome sequence of Clostridium phytofermentans ISDg.</title>
        <authorList>
            <person name="Leschine S.B."/>
            <person name="Warnick T.A."/>
            <person name="Blanchard J.L."/>
            <person name="Schnell D.J."/>
            <person name="Petit E.L."/>
            <person name="LaTouf W.G."/>
            <person name="Copeland A."/>
            <person name="Lucas S."/>
            <person name="Lapidus A."/>
            <person name="Barry K."/>
            <person name="Glavina del Rio T."/>
            <person name="Dalin E."/>
            <person name="Tice H."/>
            <person name="Pitluck S."/>
            <person name="Kiss H."/>
            <person name="Brettin T."/>
            <person name="Bruce D."/>
            <person name="Detter J.C."/>
            <person name="Han C."/>
            <person name="Kuske C."/>
            <person name="Schmutz J."/>
            <person name="Larimer F."/>
            <person name="Land M."/>
            <person name="Hauser L."/>
            <person name="Kyrpides N."/>
            <person name="Kim E.A."/>
            <person name="Richardson P."/>
        </authorList>
    </citation>
    <scope>NUCLEOTIDE SEQUENCE [LARGE SCALE GENOMIC DNA]</scope>
    <source>
        <strain>ATCC 700394 / DSM 18823 / ISDg</strain>
    </source>
</reference>
<organism>
    <name type="scientific">Lachnoclostridium phytofermentans (strain ATCC 700394 / DSM 18823 / ISDg)</name>
    <name type="common">Clostridium phytofermentans</name>
    <dbReference type="NCBI Taxonomy" id="357809"/>
    <lineage>
        <taxon>Bacteria</taxon>
        <taxon>Bacillati</taxon>
        <taxon>Bacillota</taxon>
        <taxon>Clostridia</taxon>
        <taxon>Lachnospirales</taxon>
        <taxon>Lachnospiraceae</taxon>
    </lineage>
</organism>
<protein>
    <recommendedName>
        <fullName evidence="1">Chaperone protein DnaK</fullName>
    </recommendedName>
    <alternativeName>
        <fullName evidence="1">HSP70</fullName>
    </alternativeName>
    <alternativeName>
        <fullName evidence="1">Heat shock 70 kDa protein</fullName>
    </alternativeName>
    <alternativeName>
        <fullName evidence="1">Heat shock protein 70</fullName>
    </alternativeName>
</protein>
<dbReference type="EMBL" id="CP000885">
    <property type="protein sequence ID" value="ABX42672.1"/>
    <property type="molecule type" value="Genomic_DNA"/>
</dbReference>
<dbReference type="RefSeq" id="WP_012200326.1">
    <property type="nucleotide sequence ID" value="NC_010001.1"/>
</dbReference>
<dbReference type="SMR" id="A9KKU0"/>
<dbReference type="STRING" id="357809.Cphy_2311"/>
<dbReference type="KEGG" id="cpy:Cphy_2311"/>
<dbReference type="eggNOG" id="COG0443">
    <property type="taxonomic scope" value="Bacteria"/>
</dbReference>
<dbReference type="HOGENOM" id="CLU_005965_2_4_9"/>
<dbReference type="OrthoDB" id="9766019at2"/>
<dbReference type="Proteomes" id="UP000000370">
    <property type="component" value="Chromosome"/>
</dbReference>
<dbReference type="GO" id="GO:0005524">
    <property type="term" value="F:ATP binding"/>
    <property type="evidence" value="ECO:0007669"/>
    <property type="project" value="UniProtKB-UniRule"/>
</dbReference>
<dbReference type="GO" id="GO:0140662">
    <property type="term" value="F:ATP-dependent protein folding chaperone"/>
    <property type="evidence" value="ECO:0007669"/>
    <property type="project" value="InterPro"/>
</dbReference>
<dbReference type="GO" id="GO:0051082">
    <property type="term" value="F:unfolded protein binding"/>
    <property type="evidence" value="ECO:0007669"/>
    <property type="project" value="InterPro"/>
</dbReference>
<dbReference type="CDD" id="cd10234">
    <property type="entry name" value="ASKHA_NBD_HSP70_DnaK-like"/>
    <property type="match status" value="1"/>
</dbReference>
<dbReference type="FunFam" id="2.60.34.10:FF:000014">
    <property type="entry name" value="Chaperone protein DnaK HSP70"/>
    <property type="match status" value="1"/>
</dbReference>
<dbReference type="FunFam" id="1.20.1270.10:FF:000001">
    <property type="entry name" value="Molecular chaperone DnaK"/>
    <property type="match status" value="1"/>
</dbReference>
<dbReference type="FunFam" id="3.30.420.40:FF:000071">
    <property type="entry name" value="Molecular chaperone DnaK"/>
    <property type="match status" value="1"/>
</dbReference>
<dbReference type="FunFam" id="3.90.640.10:FF:000003">
    <property type="entry name" value="Molecular chaperone DnaK"/>
    <property type="match status" value="1"/>
</dbReference>
<dbReference type="Gene3D" id="1.20.1270.10">
    <property type="match status" value="1"/>
</dbReference>
<dbReference type="Gene3D" id="3.30.30.30">
    <property type="match status" value="1"/>
</dbReference>
<dbReference type="Gene3D" id="3.30.420.40">
    <property type="match status" value="3"/>
</dbReference>
<dbReference type="Gene3D" id="3.90.640.10">
    <property type="entry name" value="Actin, Chain A, domain 4"/>
    <property type="match status" value="1"/>
</dbReference>
<dbReference type="Gene3D" id="2.60.34.10">
    <property type="entry name" value="Substrate Binding Domain Of DNAk, Chain A, domain 1"/>
    <property type="match status" value="1"/>
</dbReference>
<dbReference type="HAMAP" id="MF_00332">
    <property type="entry name" value="DnaK"/>
    <property type="match status" value="1"/>
</dbReference>
<dbReference type="InterPro" id="IPR043129">
    <property type="entry name" value="ATPase_NBD"/>
</dbReference>
<dbReference type="InterPro" id="IPR012725">
    <property type="entry name" value="Chaperone_DnaK"/>
</dbReference>
<dbReference type="InterPro" id="IPR018181">
    <property type="entry name" value="Heat_shock_70_CS"/>
</dbReference>
<dbReference type="InterPro" id="IPR029048">
    <property type="entry name" value="HSP70_C_sf"/>
</dbReference>
<dbReference type="InterPro" id="IPR029047">
    <property type="entry name" value="HSP70_peptide-bd_sf"/>
</dbReference>
<dbReference type="InterPro" id="IPR013126">
    <property type="entry name" value="Hsp_70_fam"/>
</dbReference>
<dbReference type="NCBIfam" id="NF001413">
    <property type="entry name" value="PRK00290.1"/>
    <property type="match status" value="1"/>
</dbReference>
<dbReference type="NCBIfam" id="TIGR02350">
    <property type="entry name" value="prok_dnaK"/>
    <property type="match status" value="1"/>
</dbReference>
<dbReference type="PANTHER" id="PTHR19375">
    <property type="entry name" value="HEAT SHOCK PROTEIN 70KDA"/>
    <property type="match status" value="1"/>
</dbReference>
<dbReference type="Pfam" id="PF00012">
    <property type="entry name" value="HSP70"/>
    <property type="match status" value="1"/>
</dbReference>
<dbReference type="PRINTS" id="PR00301">
    <property type="entry name" value="HEATSHOCK70"/>
</dbReference>
<dbReference type="SUPFAM" id="SSF53067">
    <property type="entry name" value="Actin-like ATPase domain"/>
    <property type="match status" value="2"/>
</dbReference>
<dbReference type="SUPFAM" id="SSF100934">
    <property type="entry name" value="Heat shock protein 70kD (HSP70), C-terminal subdomain"/>
    <property type="match status" value="1"/>
</dbReference>
<dbReference type="SUPFAM" id="SSF100920">
    <property type="entry name" value="Heat shock protein 70kD (HSP70), peptide-binding domain"/>
    <property type="match status" value="1"/>
</dbReference>
<dbReference type="PROSITE" id="PS00297">
    <property type="entry name" value="HSP70_1"/>
    <property type="match status" value="1"/>
</dbReference>
<dbReference type="PROSITE" id="PS00329">
    <property type="entry name" value="HSP70_2"/>
    <property type="match status" value="1"/>
</dbReference>
<dbReference type="PROSITE" id="PS01036">
    <property type="entry name" value="HSP70_3"/>
    <property type="match status" value="1"/>
</dbReference>
<evidence type="ECO:0000255" key="1">
    <source>
        <dbReference type="HAMAP-Rule" id="MF_00332"/>
    </source>
</evidence>
<evidence type="ECO:0000256" key="2">
    <source>
        <dbReference type="SAM" id="MobiDB-lite"/>
    </source>
</evidence>
<feature type="chain" id="PRO_1000079221" description="Chaperone protein DnaK">
    <location>
        <begin position="1"/>
        <end position="620"/>
    </location>
</feature>
<feature type="region of interest" description="Disordered" evidence="2">
    <location>
        <begin position="590"/>
        <end position="620"/>
    </location>
</feature>
<feature type="modified residue" description="Phosphothreonine; by autocatalysis" evidence="1">
    <location>
        <position position="174"/>
    </location>
</feature>
<keyword id="KW-0067">ATP-binding</keyword>
<keyword id="KW-0143">Chaperone</keyword>
<keyword id="KW-0547">Nucleotide-binding</keyword>
<keyword id="KW-0597">Phosphoprotein</keyword>
<keyword id="KW-1185">Reference proteome</keyword>
<keyword id="KW-0346">Stress response</keyword>
<gene>
    <name evidence="1" type="primary">dnaK</name>
    <name type="ordered locus">Cphy_2311</name>
</gene>